<proteinExistence type="evidence at protein level"/>
<organism>
    <name type="scientific">Mus musculus</name>
    <name type="common">Mouse</name>
    <dbReference type="NCBI Taxonomy" id="10090"/>
    <lineage>
        <taxon>Eukaryota</taxon>
        <taxon>Metazoa</taxon>
        <taxon>Chordata</taxon>
        <taxon>Craniata</taxon>
        <taxon>Vertebrata</taxon>
        <taxon>Euteleostomi</taxon>
        <taxon>Mammalia</taxon>
        <taxon>Eutheria</taxon>
        <taxon>Euarchontoglires</taxon>
        <taxon>Glires</taxon>
        <taxon>Rodentia</taxon>
        <taxon>Myomorpha</taxon>
        <taxon>Muroidea</taxon>
        <taxon>Muridae</taxon>
        <taxon>Murinae</taxon>
        <taxon>Mus</taxon>
        <taxon>Mus</taxon>
    </lineage>
</organism>
<sequence>MAPKRQSAILPQPKKPRPAAAPKLEDKSASPGLPKGEKEQQEAIEHIDEVQNEIDRLNEQASEEILKVEQKYNKLRQPFFQKRSELIAKIPNFWVTTFVNHPQVSALLGEEDEEALHYLTRVEVTEFEDIKSGYRIDFYFDENPYFENKVLSKEFHLNESGDPSSKSTEIKWKSGKDLTKRSSQTQNKASRKRQHEEPESFFTWFTDHSDAGADELGEVIKDDIWPNPLQYYLVPDMDDEEGEAEDDDDDDEEEEGLEDIDEEGDEDEGEEDDDEDEGEEGEEDEGEDD</sequence>
<gene>
    <name type="primary">Set</name>
</gene>
<comment type="function">
    <text evidence="1">Multitasking protein, involved in apoptosis, transcription, nucleosome assembly and histone chaperoning. Isoform 2 anti-apoptotic activity is mediated by inhibition of the GZMA-activated DNase, NME1. In the course of cytotoxic T-lymphocyte (CTL)-induced apoptosis, GZMA cleaves SET, disrupting its binding to NME1 and releasing NME1 inhibition. Isoform 1 and isoform 2 are potent inhibitors of protein phosphatase 2A. Isoform 1 and isoform 2 inhibit EP300/CREBBP and PCAF-mediated acetylation of histones (HAT) and nucleosomes, most probably by masking the accessibility of lysines of histones to the acetylases. The predominant target for inhibition is histone H4. HAT inhibition leads to silencing of HAT-dependent transcription and prevents active demethylation of DNA. Both isoforms stimulate DNA replication of the adenovirus genome complexed with viral core proteins; however, isoform 2 specific activity is higher (By similarity).</text>
</comment>
<comment type="subunit">
    <text evidence="5">Headphone-shaped homodimer. Isoform 1 and isoform 2 interact directly with each other and with ANP32A within the tripartite INHAT (inhibitor of acetyltransferases) complex. Isoform 1 and isoform 2 interact also with histones. Isoform 2 is a omponent of the SET complex, composed of at least ANP32A, APEX1, HMGB2, NME1, SET and TREX1, but not NME2 or TREX2. Within this complex, directly interacts with ANP32A, NME1, HMGB2 and TREX1; the interaction with ANP32A is enhanced after cleavage. Interacts with APBB1, CHTOP, SETBP1, SGO1.</text>
</comment>
<comment type="subcellular location">
    <subcellularLocation>
        <location evidence="1">Cytoplasm</location>
        <location evidence="1">Cytosol</location>
    </subcellularLocation>
    <subcellularLocation>
        <location evidence="1">Endoplasmic reticulum</location>
    </subcellularLocation>
    <subcellularLocation>
        <location evidence="1">Nucleus</location>
        <location evidence="1">Nucleoplasm</location>
    </subcellularLocation>
    <text evidence="1">In the cytoplasm, found both in the cytosol and associated with the endoplasmic reticulum. The SET complex is associated with the endoplasmic reticulum. Following CTL attack and cleavage by GZMA, moves rapidly to the nucleus, where it is found in the nucleoplasm, avoiding the nucleolus. Similar translocation to the nucleus is also observed for lymphocyte-activated killer cells after the addition of calcium (By similarity).</text>
</comment>
<comment type="alternative products">
    <event type="alternative splicing"/>
    <isoform>
        <id>Q9EQU5-1</id>
        <name>1</name>
        <name>TAF-I alpha</name>
        <sequence type="displayed"/>
    </isoform>
    <isoform>
        <id>Q9EQU5-2</id>
        <name>2</name>
        <name>TAF-I beta</name>
        <sequence type="described" ref="VSP_009869"/>
    </isoform>
    <isoform>
        <id>Q9EQU5-3</id>
        <name>3</name>
        <sequence type="described" ref="VSP_009870 VSP_009871"/>
    </isoform>
</comment>
<comment type="domain">
    <text evidence="1">A long alpha helix in the N-terminus mediates dimerization, while the earmuff domain is responsible for core histone and dsDNA binding. The C-terminal acidic domain mediates the inhibition of histone acetyltransferases and is required for the DNA replication stimulatory activity (By similarity).</text>
</comment>
<comment type="PTM">
    <text>Some glutamate residues are glycylated by TTLL8. This modification occurs exclusively on glutamate residues and results in a glycine chain on the gamma-carboxyl group.</text>
</comment>
<comment type="PTM">
    <text evidence="4">N-terminus of isoform 1 is methylated by METTL11A/NTM1. Mainly trimethylated.</text>
</comment>
<comment type="PTM">
    <molecule>Isoform 2</molecule>
    <text evidence="1">Cleaved after Lys-176 by GZMA. The cleavage inhibits its nucleosome assembly activity and disrupts the inhibition on NME1 (By similarity).</text>
</comment>
<comment type="similarity">
    <text evidence="8">Belongs to the nucleosome assembly protein (NAP) family.</text>
</comment>
<accession>Q9EQU5</accession>
<accession>A2BE95</accession>
<accession>Q9CY82</accession>
<accession>Q9D0A9</accession>
<accession>Q9Z181</accession>
<feature type="initiator methionine" description="Removed" evidence="4">
    <location>
        <position position="1"/>
    </location>
</feature>
<feature type="chain" id="PRO_0000185663" description="Protein SET">
    <location>
        <begin position="2"/>
        <end position="289"/>
    </location>
</feature>
<feature type="region of interest" description="Disordered" evidence="3">
    <location>
        <begin position="1"/>
        <end position="45"/>
    </location>
</feature>
<feature type="region of interest" description="Dimerization" evidence="1">
    <location>
        <begin position="31"/>
        <end position="77"/>
    </location>
</feature>
<feature type="region of interest" description="Earmuff domain" evidence="1">
    <location>
        <begin position="78"/>
        <end position="224"/>
    </location>
</feature>
<feature type="region of interest" description="Disordered" evidence="3">
    <location>
        <begin position="157"/>
        <end position="206"/>
    </location>
</feature>
<feature type="region of interest" description="Disordered" evidence="3">
    <location>
        <begin position="235"/>
        <end position="289"/>
    </location>
</feature>
<feature type="compositionally biased region" description="Basic and acidic residues" evidence="3">
    <location>
        <begin position="35"/>
        <end position="45"/>
    </location>
</feature>
<feature type="compositionally biased region" description="Basic and acidic residues" evidence="3">
    <location>
        <begin position="168"/>
        <end position="180"/>
    </location>
</feature>
<feature type="compositionally biased region" description="Acidic residues" evidence="3">
    <location>
        <begin position="236"/>
        <end position="289"/>
    </location>
</feature>
<feature type="modified residue" description="N,N,N-trimethylalanine; by NTM1" evidence="4">
    <location>
        <position position="2"/>
    </location>
</feature>
<feature type="modified residue" description="Phosphoserine" evidence="2">
    <location>
        <position position="7"/>
    </location>
</feature>
<feature type="modified residue" description="N6-acetyllysine" evidence="10">
    <location>
        <position position="23"/>
    </location>
</feature>
<feature type="modified residue" description="Phosphoserine" evidence="2">
    <location>
        <position position="28"/>
    </location>
</feature>
<feature type="modified residue" description="Phosphoserine" evidence="2">
    <location>
        <position position="62"/>
    </location>
</feature>
<feature type="modified residue" description="N6-acetyllysine" evidence="10">
    <location>
        <position position="67"/>
    </location>
</feature>
<feature type="modified residue" description="Phosphotyrosine" evidence="9">
    <location>
        <position position="145"/>
    </location>
</feature>
<feature type="modified residue" description="N6-acetyllysine" evidence="2">
    <location>
        <position position="149"/>
    </location>
</feature>
<feature type="modified residue" description="N6-acetyllysine" evidence="2">
    <location>
        <position position="171"/>
    </location>
</feature>
<feature type="cross-link" description="Glycyl lysine isopeptide (Lys-Gly) (interchain with G-Cter in ubiquitin)" evidence="2">
    <location>
        <position position="153"/>
    </location>
</feature>
<feature type="splice variant" id="VSP_009869" description="In isoform 2." evidence="6 7">
    <original>MAPKRQSAILPQPKKPRPAAAPKLEDKSASPGLPKG</original>
    <variation>MSAPTAKASKKELNSNHDGADETS</variation>
    <location>
        <begin position="1"/>
        <end position="36"/>
    </location>
</feature>
<feature type="splice variant" id="VSP_009870" description="In isoform 3." evidence="7">
    <original>RSELIAKIPNFWVTTFVNHPQVSALLGEEDEEALHYLTRVEVTEFEDIKSGYRIDFYFDENPYF</original>
    <variation>STTWFPTWMMKKERQKMMMTTTKRRRGWKILMKKEMRMKVKKMTMRMKGRKERRTKARMISTED</variation>
    <location>
        <begin position="83"/>
        <end position="146"/>
    </location>
</feature>
<feature type="splice variant" id="VSP_009871" description="In isoform 3." evidence="7">
    <location>
        <begin position="147"/>
        <end position="289"/>
    </location>
</feature>
<feature type="mutagenesis site" description="Almost abolishes N-terminal methylation at A-2." evidence="4">
    <original>K</original>
    <variation>Q</variation>
    <location>
        <position position="4"/>
    </location>
</feature>
<feature type="sequence conflict" description="In Ref. 5; BAA34736." evidence="8" ref="5">
    <original>P</original>
    <variation>L</variation>
    <location>
        <position position="91"/>
    </location>
</feature>
<feature type="sequence conflict" description="In Ref. 5; BAA34736." evidence="8" ref="5">
    <original>Q</original>
    <variation>L</variation>
    <location>
        <position position="184"/>
    </location>
</feature>
<feature type="sequence conflict" description="In Ref. 5; BAA34736." evidence="8" ref="5">
    <original>D</original>
    <variation>A</variation>
    <location>
        <position position="207"/>
    </location>
</feature>
<feature type="modified residue" description="N6-acetyllysine" evidence="8">
    <location sequence="Q9EQU5-2">
        <position position="11"/>
    </location>
</feature>
<feature type="modified residue" description="Phosphoserine" evidence="8">
    <location sequence="Q9EQU5-2">
        <position position="15"/>
    </location>
</feature>
<feature type="modified residue" description="Phosphothreonine" evidence="8">
    <location sequence="Q9EQU5-2">
        <position position="23"/>
    </location>
</feature>
<keyword id="KW-0007">Acetylation</keyword>
<keyword id="KW-0025">Alternative splicing</keyword>
<keyword id="KW-0143">Chaperone</keyword>
<keyword id="KW-0963">Cytoplasm</keyword>
<keyword id="KW-0238">DNA-binding</keyword>
<keyword id="KW-0256">Endoplasmic reticulum</keyword>
<keyword id="KW-1017">Isopeptide bond</keyword>
<keyword id="KW-0488">Methylation</keyword>
<keyword id="KW-0539">Nucleus</keyword>
<keyword id="KW-0597">Phosphoprotein</keyword>
<keyword id="KW-1185">Reference proteome</keyword>
<keyword id="KW-0832">Ubl conjugation</keyword>
<reference key="1">
    <citation type="journal article" date="2000" name="Cancer Lett.">
        <title>Up-regulation of I-2PP2A/SET gene expression in rat primary hepatomas and regenerating livers.</title>
        <authorList>
            <person name="Fukukawa C."/>
            <person name="Shima H."/>
            <person name="Tamura N."/>
            <person name="Ogawa K."/>
            <person name="Kikuchi K."/>
        </authorList>
    </citation>
    <scope>NUCLEOTIDE SEQUENCE [MRNA] (ISOFORM 1)</scope>
    <source>
        <strain>C57BL/6 X DBA/2</strain>
        <tissue>Blastocyst</tissue>
    </source>
</reference>
<reference key="2">
    <citation type="journal article" date="2005" name="Science">
        <title>The transcriptional landscape of the mammalian genome.</title>
        <authorList>
            <person name="Carninci P."/>
            <person name="Kasukawa T."/>
            <person name="Katayama S."/>
            <person name="Gough J."/>
            <person name="Frith M.C."/>
            <person name="Maeda N."/>
            <person name="Oyama R."/>
            <person name="Ravasi T."/>
            <person name="Lenhard B."/>
            <person name="Wells C."/>
            <person name="Kodzius R."/>
            <person name="Shimokawa K."/>
            <person name="Bajic V.B."/>
            <person name="Brenner S.E."/>
            <person name="Batalov S."/>
            <person name="Forrest A.R."/>
            <person name="Zavolan M."/>
            <person name="Davis M.J."/>
            <person name="Wilming L.G."/>
            <person name="Aidinis V."/>
            <person name="Allen J.E."/>
            <person name="Ambesi-Impiombato A."/>
            <person name="Apweiler R."/>
            <person name="Aturaliya R.N."/>
            <person name="Bailey T.L."/>
            <person name="Bansal M."/>
            <person name="Baxter L."/>
            <person name="Beisel K.W."/>
            <person name="Bersano T."/>
            <person name="Bono H."/>
            <person name="Chalk A.M."/>
            <person name="Chiu K.P."/>
            <person name="Choudhary V."/>
            <person name="Christoffels A."/>
            <person name="Clutterbuck D.R."/>
            <person name="Crowe M.L."/>
            <person name="Dalla E."/>
            <person name="Dalrymple B.P."/>
            <person name="de Bono B."/>
            <person name="Della Gatta G."/>
            <person name="di Bernardo D."/>
            <person name="Down T."/>
            <person name="Engstrom P."/>
            <person name="Fagiolini M."/>
            <person name="Faulkner G."/>
            <person name="Fletcher C.F."/>
            <person name="Fukushima T."/>
            <person name="Furuno M."/>
            <person name="Futaki S."/>
            <person name="Gariboldi M."/>
            <person name="Georgii-Hemming P."/>
            <person name="Gingeras T.R."/>
            <person name="Gojobori T."/>
            <person name="Green R.E."/>
            <person name="Gustincich S."/>
            <person name="Harbers M."/>
            <person name="Hayashi Y."/>
            <person name="Hensch T.K."/>
            <person name="Hirokawa N."/>
            <person name="Hill D."/>
            <person name="Huminiecki L."/>
            <person name="Iacono M."/>
            <person name="Ikeo K."/>
            <person name="Iwama A."/>
            <person name="Ishikawa T."/>
            <person name="Jakt M."/>
            <person name="Kanapin A."/>
            <person name="Katoh M."/>
            <person name="Kawasawa Y."/>
            <person name="Kelso J."/>
            <person name="Kitamura H."/>
            <person name="Kitano H."/>
            <person name="Kollias G."/>
            <person name="Krishnan S.P."/>
            <person name="Kruger A."/>
            <person name="Kummerfeld S.K."/>
            <person name="Kurochkin I.V."/>
            <person name="Lareau L.F."/>
            <person name="Lazarevic D."/>
            <person name="Lipovich L."/>
            <person name="Liu J."/>
            <person name="Liuni S."/>
            <person name="McWilliam S."/>
            <person name="Madan Babu M."/>
            <person name="Madera M."/>
            <person name="Marchionni L."/>
            <person name="Matsuda H."/>
            <person name="Matsuzawa S."/>
            <person name="Miki H."/>
            <person name="Mignone F."/>
            <person name="Miyake S."/>
            <person name="Morris K."/>
            <person name="Mottagui-Tabar S."/>
            <person name="Mulder N."/>
            <person name="Nakano N."/>
            <person name="Nakauchi H."/>
            <person name="Ng P."/>
            <person name="Nilsson R."/>
            <person name="Nishiguchi S."/>
            <person name="Nishikawa S."/>
            <person name="Nori F."/>
            <person name="Ohara O."/>
            <person name="Okazaki Y."/>
            <person name="Orlando V."/>
            <person name="Pang K.C."/>
            <person name="Pavan W.J."/>
            <person name="Pavesi G."/>
            <person name="Pesole G."/>
            <person name="Petrovsky N."/>
            <person name="Piazza S."/>
            <person name="Reed J."/>
            <person name="Reid J.F."/>
            <person name="Ring B.Z."/>
            <person name="Ringwald M."/>
            <person name="Rost B."/>
            <person name="Ruan Y."/>
            <person name="Salzberg S.L."/>
            <person name="Sandelin A."/>
            <person name="Schneider C."/>
            <person name="Schoenbach C."/>
            <person name="Sekiguchi K."/>
            <person name="Semple C.A."/>
            <person name="Seno S."/>
            <person name="Sessa L."/>
            <person name="Sheng Y."/>
            <person name="Shibata Y."/>
            <person name="Shimada H."/>
            <person name="Shimada K."/>
            <person name="Silva D."/>
            <person name="Sinclair B."/>
            <person name="Sperling S."/>
            <person name="Stupka E."/>
            <person name="Sugiura K."/>
            <person name="Sultana R."/>
            <person name="Takenaka Y."/>
            <person name="Taki K."/>
            <person name="Tammoja K."/>
            <person name="Tan S.L."/>
            <person name="Tang S."/>
            <person name="Taylor M.S."/>
            <person name="Tegner J."/>
            <person name="Teichmann S.A."/>
            <person name="Ueda H.R."/>
            <person name="van Nimwegen E."/>
            <person name="Verardo R."/>
            <person name="Wei C.L."/>
            <person name="Yagi K."/>
            <person name="Yamanishi H."/>
            <person name="Zabarovsky E."/>
            <person name="Zhu S."/>
            <person name="Zimmer A."/>
            <person name="Hide W."/>
            <person name="Bult C."/>
            <person name="Grimmond S.M."/>
            <person name="Teasdale R.D."/>
            <person name="Liu E.T."/>
            <person name="Brusic V."/>
            <person name="Quackenbush J."/>
            <person name="Wahlestedt C."/>
            <person name="Mattick J.S."/>
            <person name="Hume D.A."/>
            <person name="Kai C."/>
            <person name="Sasaki D."/>
            <person name="Tomaru Y."/>
            <person name="Fukuda S."/>
            <person name="Kanamori-Katayama M."/>
            <person name="Suzuki M."/>
            <person name="Aoki J."/>
            <person name="Arakawa T."/>
            <person name="Iida J."/>
            <person name="Imamura K."/>
            <person name="Itoh M."/>
            <person name="Kato T."/>
            <person name="Kawaji H."/>
            <person name="Kawagashira N."/>
            <person name="Kawashima T."/>
            <person name="Kojima M."/>
            <person name="Kondo S."/>
            <person name="Konno H."/>
            <person name="Nakano K."/>
            <person name="Ninomiya N."/>
            <person name="Nishio T."/>
            <person name="Okada M."/>
            <person name="Plessy C."/>
            <person name="Shibata K."/>
            <person name="Shiraki T."/>
            <person name="Suzuki S."/>
            <person name="Tagami M."/>
            <person name="Waki K."/>
            <person name="Watahiki A."/>
            <person name="Okamura-Oho Y."/>
            <person name="Suzuki H."/>
            <person name="Kawai J."/>
            <person name="Hayashizaki Y."/>
        </authorList>
    </citation>
    <scope>NUCLEOTIDE SEQUENCE [LARGE SCALE MRNA] (ISOFORMS 2 AND 3)</scope>
    <source>
        <strain>C57BL/6J</strain>
        <tissue>Embryo</tissue>
    </source>
</reference>
<reference key="3">
    <citation type="journal article" date="2009" name="PLoS Biol.">
        <title>Lineage-specific biology revealed by a finished genome assembly of the mouse.</title>
        <authorList>
            <person name="Church D.M."/>
            <person name="Goodstadt L."/>
            <person name="Hillier L.W."/>
            <person name="Zody M.C."/>
            <person name="Goldstein S."/>
            <person name="She X."/>
            <person name="Bult C.J."/>
            <person name="Agarwala R."/>
            <person name="Cherry J.L."/>
            <person name="DiCuccio M."/>
            <person name="Hlavina W."/>
            <person name="Kapustin Y."/>
            <person name="Meric P."/>
            <person name="Maglott D."/>
            <person name="Birtle Z."/>
            <person name="Marques A.C."/>
            <person name="Graves T."/>
            <person name="Zhou S."/>
            <person name="Teague B."/>
            <person name="Potamousis K."/>
            <person name="Churas C."/>
            <person name="Place M."/>
            <person name="Herschleb J."/>
            <person name="Runnheim R."/>
            <person name="Forrest D."/>
            <person name="Amos-Landgraf J."/>
            <person name="Schwartz D.C."/>
            <person name="Cheng Z."/>
            <person name="Lindblad-Toh K."/>
            <person name="Eichler E.E."/>
            <person name="Ponting C.P."/>
        </authorList>
    </citation>
    <scope>NUCLEOTIDE SEQUENCE [LARGE SCALE GENOMIC DNA]</scope>
    <source>
        <strain>C57BL/6J</strain>
    </source>
</reference>
<reference key="4">
    <citation type="journal article" date="2004" name="Genome Res.">
        <title>The status, quality, and expansion of the NIH full-length cDNA project: the Mammalian Gene Collection (MGC).</title>
        <authorList>
            <consortium name="The MGC Project Team"/>
        </authorList>
    </citation>
    <scope>NUCLEOTIDE SEQUENCE [LARGE SCALE MRNA] (ISOFORM 1)</scope>
    <source>
        <strain>Czech II</strain>
        <tissue>Mammary tumor</tissue>
    </source>
</reference>
<reference key="5">
    <citation type="journal article" date="2001" name="Eur. J. Biochem.">
        <title>Identification and characterization of SEB, a novel protein that binds to the acute undifferentiated leukemia-associated protein SET.</title>
        <authorList>
            <person name="Minakuchi M."/>
            <person name="Kakazu N."/>
            <person name="Gorrin-Rivas M.J."/>
            <person name="Abe T."/>
            <person name="Copeland T.D."/>
            <person name="Ueda K."/>
            <person name="Adachi Y."/>
        </authorList>
    </citation>
    <scope>NUCLEOTIDE SEQUENCE [MRNA] OF 1-222 (ISOFORM 2)</scope>
    <source>
        <tissue>Embryo</tissue>
    </source>
</reference>
<reference key="6">
    <citation type="journal article" date="2007" name="J. Immunol.">
        <title>Quantitative time-resolved phosphoproteomic analysis of mast cell signaling.</title>
        <authorList>
            <person name="Cao L."/>
            <person name="Yu K."/>
            <person name="Banh C."/>
            <person name="Nguyen V."/>
            <person name="Ritz A."/>
            <person name="Raphael B.J."/>
            <person name="Kawakami Y."/>
            <person name="Kawakami T."/>
            <person name="Salomon A.R."/>
        </authorList>
    </citation>
    <scope>PHOSPHORYLATION [LARGE SCALE ANALYSIS] AT TYR-145</scope>
    <scope>IDENTIFICATION BY MASS SPECTROMETRY [LARGE SCALE ANALYSIS]</scope>
    <source>
        <tissue>Mast cell</tissue>
    </source>
</reference>
<reference key="7">
    <citation type="journal article" date="2009" name="Cell">
        <title>Evolutionary divergence of enzymatic mechanisms for posttranslational polyglycylation.</title>
        <authorList>
            <person name="Rogowski K."/>
            <person name="Juge F."/>
            <person name="van Dijk J."/>
            <person name="Wloga D."/>
            <person name="Strub J.-M."/>
            <person name="Levilliers N."/>
            <person name="Thomas D."/>
            <person name="Bre M.-H."/>
            <person name="Van Dorsselaer A."/>
            <person name="Gaertig J."/>
            <person name="Janke C."/>
        </authorList>
    </citation>
    <scope>GLYCYLATION</scope>
</reference>
<reference key="8">
    <citation type="journal article" date="2010" name="Cell">
        <title>A tissue-specific atlas of mouse protein phosphorylation and expression.</title>
        <authorList>
            <person name="Huttlin E.L."/>
            <person name="Jedrychowski M.P."/>
            <person name="Elias J.E."/>
            <person name="Goswami T."/>
            <person name="Rad R."/>
            <person name="Beausoleil S.A."/>
            <person name="Villen J."/>
            <person name="Haas W."/>
            <person name="Sowa M.E."/>
            <person name="Gygi S.P."/>
        </authorList>
    </citation>
    <scope>IDENTIFICATION BY MASS SPECTROMETRY [LARGE SCALE ANALYSIS]</scope>
    <source>
        <tissue>Brain</tissue>
        <tissue>Brown adipose tissue</tissue>
        <tissue>Heart</tissue>
        <tissue>Kidney</tissue>
        <tissue>Liver</tissue>
        <tissue>Lung</tissue>
        <tissue>Pancreas</tissue>
        <tissue>Spleen</tissue>
        <tissue>Testis</tissue>
    </source>
</reference>
<reference key="9">
    <citation type="journal article" date="2010" name="Nature">
        <title>NRMT is an alpha-N-methyltransferase that methylates RCC1 and retinoblastoma protein.</title>
        <authorList>
            <person name="Tooley C.E."/>
            <person name="Petkowski J.J."/>
            <person name="Muratore-Schroeder T.L."/>
            <person name="Balsbaugh J.L."/>
            <person name="Shabanowitz J."/>
            <person name="Sabat M."/>
            <person name="Minor W."/>
            <person name="Hunt D.F."/>
            <person name="Macara I.G."/>
        </authorList>
    </citation>
    <scope>CLEAVAGE OF INITIATOR METHIONINE</scope>
    <scope>METHYLATION AT ALA-2</scope>
    <scope>MUTAGENESIS OF LYS-4</scope>
</reference>
<reference key="10">
    <citation type="journal article" date="2012" name="Mol. Cell. Proteomics">
        <title>Five friends of methylated chromatin target of protein-arginine-methyltransferase[prmt]-1 (chtop), a complex linking arginine methylation to desumoylation.</title>
        <authorList>
            <person name="Fanis P."/>
            <person name="Gillemans N."/>
            <person name="Aghajanirefah A."/>
            <person name="Pourfarzad F."/>
            <person name="Demmers J."/>
            <person name="Esteghamat F."/>
            <person name="Vadlamudi R.K."/>
            <person name="Grosveld F."/>
            <person name="Philipsen S."/>
            <person name="van Dijk T.B."/>
        </authorList>
    </citation>
    <scope>INTERACTION WITH CHTOP</scope>
</reference>
<reference key="11">
    <citation type="journal article" date="2013" name="Mol. Cell">
        <title>SIRT5-mediated lysine desuccinylation impacts diverse metabolic pathways.</title>
        <authorList>
            <person name="Park J."/>
            <person name="Chen Y."/>
            <person name="Tishkoff D.X."/>
            <person name="Peng C."/>
            <person name="Tan M."/>
            <person name="Dai L."/>
            <person name="Xie Z."/>
            <person name="Zhang Y."/>
            <person name="Zwaans B.M."/>
            <person name="Skinner M.E."/>
            <person name="Lombard D.B."/>
            <person name="Zhao Y."/>
        </authorList>
    </citation>
    <scope>ACETYLATION [LARGE SCALE ANALYSIS] AT LYS-23 AND LYS-67</scope>
    <scope>IDENTIFICATION BY MASS SPECTROMETRY [LARGE SCALE ANALYSIS]</scope>
    <source>
        <tissue>Embryonic fibroblast</tissue>
    </source>
</reference>
<name>SET_MOUSE</name>
<dbReference type="EMBL" id="AB044937">
    <property type="protein sequence ID" value="BAB20793.1"/>
    <property type="molecule type" value="mRNA"/>
</dbReference>
<dbReference type="EMBL" id="AK011630">
    <property type="protein sequence ID" value="BAB27745.1"/>
    <property type="molecule type" value="mRNA"/>
</dbReference>
<dbReference type="EMBL" id="AK019960">
    <property type="protein sequence ID" value="BAB31936.1"/>
    <property type="molecule type" value="mRNA"/>
</dbReference>
<dbReference type="EMBL" id="BX005298">
    <property type="status" value="NOT_ANNOTATED_CDS"/>
    <property type="molecule type" value="Genomic_DNA"/>
</dbReference>
<dbReference type="EMBL" id="BC018255">
    <property type="protein sequence ID" value="AAH18255.1"/>
    <property type="molecule type" value="mRNA"/>
</dbReference>
<dbReference type="EMBL" id="AB015613">
    <property type="protein sequence ID" value="BAA34736.1"/>
    <property type="molecule type" value="mRNA"/>
</dbReference>
<dbReference type="CCDS" id="CCDS15866.1">
    <molecule id="Q9EQU5-1"/>
</dbReference>
<dbReference type="CCDS" id="CCDS57162.1">
    <molecule id="Q9EQU5-2"/>
</dbReference>
<dbReference type="RefSeq" id="NP_001191804.1">
    <molecule id="Q9EQU5-2"/>
    <property type="nucleotide sequence ID" value="NM_001204875.2"/>
</dbReference>
<dbReference type="RefSeq" id="NP_076360.1">
    <molecule id="Q9EQU5-1"/>
    <property type="nucleotide sequence ID" value="NM_023871.5"/>
</dbReference>
<dbReference type="SMR" id="Q9EQU5"/>
<dbReference type="BioGRID" id="207808">
    <property type="interactions" value="116"/>
</dbReference>
<dbReference type="CORUM" id="Q9EQU5"/>
<dbReference type="FunCoup" id="Q9EQU5">
    <property type="interactions" value="4865"/>
</dbReference>
<dbReference type="IntAct" id="Q9EQU5">
    <property type="interactions" value="71"/>
</dbReference>
<dbReference type="STRING" id="10090.ENSMUSP00000099930"/>
<dbReference type="GlyGen" id="Q9EQU5">
    <property type="glycosylation" value="1 site, 1 O-linked glycan (1 site)"/>
</dbReference>
<dbReference type="iPTMnet" id="Q9EQU5"/>
<dbReference type="PhosphoSitePlus" id="Q9EQU5"/>
<dbReference type="CPTAC" id="non-CPTAC-3874"/>
<dbReference type="jPOST" id="Q9EQU5"/>
<dbReference type="PaxDb" id="10090-ENSMUSP00000099930"/>
<dbReference type="PeptideAtlas" id="Q9EQU5"/>
<dbReference type="ProteomicsDB" id="261172">
    <molecule id="Q9EQU5-1"/>
</dbReference>
<dbReference type="ProteomicsDB" id="261173">
    <molecule id="Q9EQU5-2"/>
</dbReference>
<dbReference type="ProteomicsDB" id="261174">
    <molecule id="Q9EQU5-3"/>
</dbReference>
<dbReference type="Pumba" id="Q9EQU5"/>
<dbReference type="DNASU" id="56086"/>
<dbReference type="Ensembl" id="ENSMUST00000067996.7">
    <molecule id="Q9EQU5-2"/>
    <property type="protein sequence ID" value="ENSMUSP00000070002.7"/>
    <property type="gene ID" value="ENSMUSG00000054766.14"/>
</dbReference>
<dbReference type="Ensembl" id="ENSMUST00000102866.10">
    <molecule id="Q9EQU5-1"/>
    <property type="protein sequence ID" value="ENSMUSP00000099930.4"/>
    <property type="gene ID" value="ENSMUSG00000054766.14"/>
</dbReference>
<dbReference type="GeneID" id="56086"/>
<dbReference type="KEGG" id="mmu:56086"/>
<dbReference type="UCSC" id="uc008jaw.2">
    <molecule id="Q9EQU5-1"/>
    <property type="organism name" value="mouse"/>
</dbReference>
<dbReference type="UCSC" id="uc008jax.2">
    <molecule id="Q9EQU5-3"/>
    <property type="organism name" value="mouse"/>
</dbReference>
<dbReference type="UCSC" id="uc008jay.2">
    <molecule id="Q9EQU5-2"/>
    <property type="organism name" value="mouse"/>
</dbReference>
<dbReference type="AGR" id="MGI:1860267"/>
<dbReference type="CTD" id="6418"/>
<dbReference type="MGI" id="MGI:1860267">
    <property type="gene designation" value="Set"/>
</dbReference>
<dbReference type="VEuPathDB" id="HostDB:ENSMUSG00000054766"/>
<dbReference type="eggNOG" id="KOG1508">
    <property type="taxonomic scope" value="Eukaryota"/>
</dbReference>
<dbReference type="GeneTree" id="ENSGT00940000154891"/>
<dbReference type="HOGENOM" id="CLU_051687_4_0_1"/>
<dbReference type="InParanoid" id="Q9EQU5"/>
<dbReference type="OMA" id="WPVALMN"/>
<dbReference type="OrthoDB" id="19419at2759"/>
<dbReference type="PhylomeDB" id="Q9EQU5"/>
<dbReference type="TreeFam" id="TF313386"/>
<dbReference type="Reactome" id="R-MMU-2299718">
    <property type="pathway name" value="Condensation of Prophase Chromosomes"/>
</dbReference>
<dbReference type="Reactome" id="R-MMU-450520">
    <property type="pathway name" value="HuR (ELAVL1) binds and stabilizes mRNA"/>
</dbReference>
<dbReference type="BioGRID-ORCS" id="56086">
    <property type="hits" value="3 hits in 79 CRISPR screens"/>
</dbReference>
<dbReference type="ChiTaRS" id="Set">
    <property type="organism name" value="mouse"/>
</dbReference>
<dbReference type="PRO" id="PR:Q9EQU5"/>
<dbReference type="Proteomes" id="UP000000589">
    <property type="component" value="Chromosome 2"/>
</dbReference>
<dbReference type="RNAct" id="Q9EQU5">
    <property type="molecule type" value="protein"/>
</dbReference>
<dbReference type="Bgee" id="ENSMUSG00000054766">
    <property type="expression patterns" value="Expressed in rhombomere 4 and 274 other cell types or tissues"/>
</dbReference>
<dbReference type="ExpressionAtlas" id="Q9EQU5">
    <property type="expression patterns" value="baseline and differential"/>
</dbReference>
<dbReference type="GO" id="GO:0005737">
    <property type="term" value="C:cytoplasm"/>
    <property type="evidence" value="ECO:0000250"/>
    <property type="project" value="UniProtKB"/>
</dbReference>
<dbReference type="GO" id="GO:0005829">
    <property type="term" value="C:cytosol"/>
    <property type="evidence" value="ECO:0007669"/>
    <property type="project" value="UniProtKB-SubCell"/>
</dbReference>
<dbReference type="GO" id="GO:0005783">
    <property type="term" value="C:endoplasmic reticulum"/>
    <property type="evidence" value="ECO:0000250"/>
    <property type="project" value="UniProtKB"/>
</dbReference>
<dbReference type="GO" id="GO:0005811">
    <property type="term" value="C:lipid droplet"/>
    <property type="evidence" value="ECO:0007669"/>
    <property type="project" value="Ensembl"/>
</dbReference>
<dbReference type="GO" id="GO:0005654">
    <property type="term" value="C:nucleoplasm"/>
    <property type="evidence" value="ECO:0007669"/>
    <property type="project" value="UniProtKB-SubCell"/>
</dbReference>
<dbReference type="GO" id="GO:0005634">
    <property type="term" value="C:nucleus"/>
    <property type="evidence" value="ECO:0000314"/>
    <property type="project" value="MGI"/>
</dbReference>
<dbReference type="GO" id="GO:0048471">
    <property type="term" value="C:perinuclear region of cytoplasm"/>
    <property type="evidence" value="ECO:0000250"/>
    <property type="project" value="UniProtKB"/>
</dbReference>
<dbReference type="GO" id="GO:0032991">
    <property type="term" value="C:protein-containing complex"/>
    <property type="evidence" value="ECO:0007669"/>
    <property type="project" value="Ensembl"/>
</dbReference>
<dbReference type="GO" id="GO:0003677">
    <property type="term" value="F:DNA binding"/>
    <property type="evidence" value="ECO:0007669"/>
    <property type="project" value="UniProtKB-KW"/>
</dbReference>
<dbReference type="GO" id="GO:0045892">
    <property type="term" value="P:negative regulation of DNA-templated transcription"/>
    <property type="evidence" value="ECO:0007669"/>
    <property type="project" value="Ensembl"/>
</dbReference>
<dbReference type="GO" id="GO:0043524">
    <property type="term" value="P:negative regulation of neuron apoptotic process"/>
    <property type="evidence" value="ECO:0000266"/>
    <property type="project" value="MGI"/>
</dbReference>
<dbReference type="GO" id="GO:0006334">
    <property type="term" value="P:nucleosome assembly"/>
    <property type="evidence" value="ECO:0007669"/>
    <property type="project" value="InterPro"/>
</dbReference>
<dbReference type="FunFam" id="1.20.5.1500:FF:000003">
    <property type="entry name" value="SET isoform 2"/>
    <property type="match status" value="1"/>
</dbReference>
<dbReference type="FunFam" id="3.30.1120.90:FF:000002">
    <property type="entry name" value="Testis-specific Y-encoded-like protein 2"/>
    <property type="match status" value="1"/>
</dbReference>
<dbReference type="Gene3D" id="1.20.5.1500">
    <property type="match status" value="1"/>
</dbReference>
<dbReference type="Gene3D" id="3.30.1120.90">
    <property type="entry name" value="Nucleosome assembly protein"/>
    <property type="match status" value="1"/>
</dbReference>
<dbReference type="InterPro" id="IPR037231">
    <property type="entry name" value="NAP-like_sf"/>
</dbReference>
<dbReference type="InterPro" id="IPR002164">
    <property type="entry name" value="NAP_family"/>
</dbReference>
<dbReference type="PANTHER" id="PTHR11875">
    <property type="entry name" value="TESTIS-SPECIFIC Y-ENCODED PROTEIN"/>
    <property type="match status" value="1"/>
</dbReference>
<dbReference type="Pfam" id="PF00956">
    <property type="entry name" value="NAP"/>
    <property type="match status" value="1"/>
</dbReference>
<dbReference type="SUPFAM" id="SSF143113">
    <property type="entry name" value="NAP-like"/>
    <property type="match status" value="1"/>
</dbReference>
<evidence type="ECO:0000250" key="1"/>
<evidence type="ECO:0000250" key="2">
    <source>
        <dbReference type="UniProtKB" id="Q01105"/>
    </source>
</evidence>
<evidence type="ECO:0000256" key="3">
    <source>
        <dbReference type="SAM" id="MobiDB-lite"/>
    </source>
</evidence>
<evidence type="ECO:0000269" key="4">
    <source>
    </source>
</evidence>
<evidence type="ECO:0000269" key="5">
    <source>
    </source>
</evidence>
<evidence type="ECO:0000303" key="6">
    <source>
    </source>
</evidence>
<evidence type="ECO:0000303" key="7">
    <source>
    </source>
</evidence>
<evidence type="ECO:0000305" key="8"/>
<evidence type="ECO:0007744" key="9">
    <source>
    </source>
</evidence>
<evidence type="ECO:0007744" key="10">
    <source>
    </source>
</evidence>
<protein>
    <recommendedName>
        <fullName>Protein SET</fullName>
    </recommendedName>
    <alternativeName>
        <fullName>Phosphatase 2A inhibitor I2PP2A</fullName>
        <shortName>I-2PP2A</shortName>
    </alternativeName>
    <alternativeName>
        <fullName>Template-activating factor I</fullName>
        <shortName>TAF-I</shortName>
    </alternativeName>
</protein>